<protein>
    <recommendedName>
        <fullName evidence="1">GTP cyclohydrolase 1</fullName>
        <ecNumber evidence="1">3.5.4.16</ecNumber>
    </recommendedName>
    <alternativeName>
        <fullName evidence="1">GTP cyclohydrolase I</fullName>
        <shortName evidence="1">GTP-CH-I</shortName>
    </alternativeName>
</protein>
<dbReference type="EC" id="3.5.4.16" evidence="1"/>
<dbReference type="EMBL" id="CP001600">
    <property type="protein sequence ID" value="ACR68474.1"/>
    <property type="molecule type" value="Genomic_DNA"/>
</dbReference>
<dbReference type="RefSeq" id="WP_015870641.1">
    <property type="nucleotide sequence ID" value="NZ_CP169062.1"/>
</dbReference>
<dbReference type="SMR" id="C5BCL9"/>
<dbReference type="STRING" id="67780.B6E78_16640"/>
<dbReference type="GeneID" id="69538292"/>
<dbReference type="KEGG" id="eic:NT01EI_1277"/>
<dbReference type="PATRIC" id="fig|634503.3.peg.1152"/>
<dbReference type="HOGENOM" id="CLU_049768_3_2_6"/>
<dbReference type="OrthoDB" id="9801207at2"/>
<dbReference type="UniPathway" id="UPA00848">
    <property type="reaction ID" value="UER00151"/>
</dbReference>
<dbReference type="Proteomes" id="UP000001485">
    <property type="component" value="Chromosome"/>
</dbReference>
<dbReference type="GO" id="GO:0005737">
    <property type="term" value="C:cytoplasm"/>
    <property type="evidence" value="ECO:0007669"/>
    <property type="project" value="TreeGrafter"/>
</dbReference>
<dbReference type="GO" id="GO:0005525">
    <property type="term" value="F:GTP binding"/>
    <property type="evidence" value="ECO:0007669"/>
    <property type="project" value="UniProtKB-KW"/>
</dbReference>
<dbReference type="GO" id="GO:0003934">
    <property type="term" value="F:GTP cyclohydrolase I activity"/>
    <property type="evidence" value="ECO:0007669"/>
    <property type="project" value="UniProtKB-UniRule"/>
</dbReference>
<dbReference type="GO" id="GO:0008270">
    <property type="term" value="F:zinc ion binding"/>
    <property type="evidence" value="ECO:0007669"/>
    <property type="project" value="UniProtKB-UniRule"/>
</dbReference>
<dbReference type="GO" id="GO:0006730">
    <property type="term" value="P:one-carbon metabolic process"/>
    <property type="evidence" value="ECO:0007669"/>
    <property type="project" value="UniProtKB-UniRule"/>
</dbReference>
<dbReference type="GO" id="GO:0006729">
    <property type="term" value="P:tetrahydrobiopterin biosynthetic process"/>
    <property type="evidence" value="ECO:0007669"/>
    <property type="project" value="TreeGrafter"/>
</dbReference>
<dbReference type="GO" id="GO:0046654">
    <property type="term" value="P:tetrahydrofolate biosynthetic process"/>
    <property type="evidence" value="ECO:0007669"/>
    <property type="project" value="UniProtKB-UniRule"/>
</dbReference>
<dbReference type="FunFam" id="1.10.286.10:FF:000002">
    <property type="entry name" value="GTP cyclohydrolase 1"/>
    <property type="match status" value="1"/>
</dbReference>
<dbReference type="FunFam" id="3.30.1130.10:FF:000001">
    <property type="entry name" value="GTP cyclohydrolase 1"/>
    <property type="match status" value="1"/>
</dbReference>
<dbReference type="Gene3D" id="1.10.286.10">
    <property type="match status" value="1"/>
</dbReference>
<dbReference type="Gene3D" id="3.30.1130.10">
    <property type="match status" value="1"/>
</dbReference>
<dbReference type="HAMAP" id="MF_00223">
    <property type="entry name" value="FolE"/>
    <property type="match status" value="1"/>
</dbReference>
<dbReference type="InterPro" id="IPR043133">
    <property type="entry name" value="GTP-CH-I_C/QueF"/>
</dbReference>
<dbReference type="InterPro" id="IPR043134">
    <property type="entry name" value="GTP-CH-I_N"/>
</dbReference>
<dbReference type="InterPro" id="IPR001474">
    <property type="entry name" value="GTP_CycHdrlase_I"/>
</dbReference>
<dbReference type="InterPro" id="IPR018234">
    <property type="entry name" value="GTP_CycHdrlase_I_CS"/>
</dbReference>
<dbReference type="InterPro" id="IPR020602">
    <property type="entry name" value="GTP_CycHdrlase_I_dom"/>
</dbReference>
<dbReference type="NCBIfam" id="TIGR00063">
    <property type="entry name" value="folE"/>
    <property type="match status" value="1"/>
</dbReference>
<dbReference type="NCBIfam" id="NF006824">
    <property type="entry name" value="PRK09347.1-1"/>
    <property type="match status" value="1"/>
</dbReference>
<dbReference type="NCBIfam" id="NF006825">
    <property type="entry name" value="PRK09347.1-2"/>
    <property type="match status" value="1"/>
</dbReference>
<dbReference type="NCBIfam" id="NF006826">
    <property type="entry name" value="PRK09347.1-3"/>
    <property type="match status" value="1"/>
</dbReference>
<dbReference type="PANTHER" id="PTHR11109:SF7">
    <property type="entry name" value="GTP CYCLOHYDROLASE 1"/>
    <property type="match status" value="1"/>
</dbReference>
<dbReference type="PANTHER" id="PTHR11109">
    <property type="entry name" value="GTP CYCLOHYDROLASE I"/>
    <property type="match status" value="1"/>
</dbReference>
<dbReference type="Pfam" id="PF01227">
    <property type="entry name" value="GTP_cyclohydroI"/>
    <property type="match status" value="1"/>
</dbReference>
<dbReference type="SUPFAM" id="SSF55620">
    <property type="entry name" value="Tetrahydrobiopterin biosynthesis enzymes-like"/>
    <property type="match status" value="1"/>
</dbReference>
<dbReference type="PROSITE" id="PS00859">
    <property type="entry name" value="GTP_CYCLOHYDROL_1_1"/>
    <property type="match status" value="1"/>
</dbReference>
<dbReference type="PROSITE" id="PS00860">
    <property type="entry name" value="GTP_CYCLOHYDROL_1_2"/>
    <property type="match status" value="1"/>
</dbReference>
<proteinExistence type="inferred from homology"/>
<accession>C5BCL9</accession>
<evidence type="ECO:0000255" key="1">
    <source>
        <dbReference type="HAMAP-Rule" id="MF_00223"/>
    </source>
</evidence>
<comment type="catalytic activity">
    <reaction evidence="1">
        <text>GTP + H2O = 7,8-dihydroneopterin 3'-triphosphate + formate + H(+)</text>
        <dbReference type="Rhea" id="RHEA:17473"/>
        <dbReference type="ChEBI" id="CHEBI:15377"/>
        <dbReference type="ChEBI" id="CHEBI:15378"/>
        <dbReference type="ChEBI" id="CHEBI:15740"/>
        <dbReference type="ChEBI" id="CHEBI:37565"/>
        <dbReference type="ChEBI" id="CHEBI:58462"/>
        <dbReference type="EC" id="3.5.4.16"/>
    </reaction>
</comment>
<comment type="pathway">
    <text evidence="1">Cofactor biosynthesis; 7,8-dihydroneopterin triphosphate biosynthesis; 7,8-dihydroneopterin triphosphate from GTP: step 1/1.</text>
</comment>
<comment type="subunit">
    <text evidence="1">Homomer.</text>
</comment>
<comment type="similarity">
    <text evidence="1">Belongs to the GTP cyclohydrolase I family.</text>
</comment>
<name>GCH1_EDWI9</name>
<keyword id="KW-0342">GTP-binding</keyword>
<keyword id="KW-0378">Hydrolase</keyword>
<keyword id="KW-0479">Metal-binding</keyword>
<keyword id="KW-0547">Nucleotide-binding</keyword>
<keyword id="KW-0554">One-carbon metabolism</keyword>
<keyword id="KW-0862">Zinc</keyword>
<reference key="1">
    <citation type="submission" date="2009-03" db="EMBL/GenBank/DDBJ databases">
        <title>Complete genome sequence of Edwardsiella ictaluri 93-146.</title>
        <authorList>
            <person name="Williams M.L."/>
            <person name="Gillaspy A.F."/>
            <person name="Dyer D.W."/>
            <person name="Thune R.L."/>
            <person name="Waldbieser G.C."/>
            <person name="Schuster S.C."/>
            <person name="Gipson J."/>
            <person name="Zaitshik J."/>
            <person name="Landry C."/>
            <person name="Lawrence M.L."/>
        </authorList>
    </citation>
    <scope>NUCLEOTIDE SEQUENCE [LARGE SCALE GENOMIC DNA]</scope>
    <source>
        <strain>93-146</strain>
    </source>
</reference>
<feature type="chain" id="PRO_1000204287" description="GTP cyclohydrolase 1">
    <location>
        <begin position="1"/>
        <end position="220"/>
    </location>
</feature>
<feature type="binding site" evidence="1">
    <location>
        <position position="109"/>
    </location>
    <ligand>
        <name>Zn(2+)</name>
        <dbReference type="ChEBI" id="CHEBI:29105"/>
    </ligand>
</feature>
<feature type="binding site" evidence="1">
    <location>
        <position position="112"/>
    </location>
    <ligand>
        <name>Zn(2+)</name>
        <dbReference type="ChEBI" id="CHEBI:29105"/>
    </ligand>
</feature>
<feature type="binding site" evidence="1">
    <location>
        <position position="180"/>
    </location>
    <ligand>
        <name>Zn(2+)</name>
        <dbReference type="ChEBI" id="CHEBI:29105"/>
    </ligand>
</feature>
<sequence length="220" mass="24617">MSSLSKEAALVHEALLARGLETPLRGEPLARDTRKAQIEAHMTEVMRLLNLDLSDDSLVETPSRIAKMYVDEIFSGLDYANFPKITIIENKMDVDEMVTVRDITLTSTCEHHFVTIDGKATVAYIPKERVIGLSKINRIVRFFAQRPQVQERLTQQILVALQTLLGTKNVAVSIDAVHYCVKARGVRDATSATTTTSLGGLFKTSQNTRQEFLRAVRHHV</sequence>
<gene>
    <name evidence="1" type="primary">folE</name>
    <name type="ordered locus">NT01EI_1277</name>
</gene>
<organism>
    <name type="scientific">Edwardsiella ictaluri (strain 93-146)</name>
    <dbReference type="NCBI Taxonomy" id="634503"/>
    <lineage>
        <taxon>Bacteria</taxon>
        <taxon>Pseudomonadati</taxon>
        <taxon>Pseudomonadota</taxon>
        <taxon>Gammaproteobacteria</taxon>
        <taxon>Enterobacterales</taxon>
        <taxon>Hafniaceae</taxon>
        <taxon>Edwardsiella</taxon>
    </lineage>
</organism>